<accession>Q08176</accession>
<accession>D6W239</accession>
<name>MIM1_YEAST</name>
<reference key="1">
    <citation type="journal article" date="1997" name="Nature">
        <title>The nucleotide sequence of Saccharomyces cerevisiae chromosome XV.</title>
        <authorList>
            <person name="Dujon B."/>
            <person name="Albermann K."/>
            <person name="Aldea M."/>
            <person name="Alexandraki D."/>
            <person name="Ansorge W."/>
            <person name="Arino J."/>
            <person name="Benes V."/>
            <person name="Bohn C."/>
            <person name="Bolotin-Fukuhara M."/>
            <person name="Bordonne R."/>
            <person name="Boyer J."/>
            <person name="Camasses A."/>
            <person name="Casamayor A."/>
            <person name="Casas C."/>
            <person name="Cheret G."/>
            <person name="Cziepluch C."/>
            <person name="Daignan-Fornier B."/>
            <person name="Dang V.-D."/>
            <person name="de Haan M."/>
            <person name="Delius H."/>
            <person name="Durand P."/>
            <person name="Fairhead C."/>
            <person name="Feldmann H."/>
            <person name="Gaillon L."/>
            <person name="Galisson F."/>
            <person name="Gamo F.-J."/>
            <person name="Gancedo C."/>
            <person name="Goffeau A."/>
            <person name="Goulding S.E."/>
            <person name="Grivell L.A."/>
            <person name="Habbig B."/>
            <person name="Hand N.J."/>
            <person name="Hani J."/>
            <person name="Hattenhorst U."/>
            <person name="Hebling U."/>
            <person name="Hernando Y."/>
            <person name="Herrero E."/>
            <person name="Heumann K."/>
            <person name="Hiesel R."/>
            <person name="Hilger F."/>
            <person name="Hofmann B."/>
            <person name="Hollenberg C.P."/>
            <person name="Hughes B."/>
            <person name="Jauniaux J.-C."/>
            <person name="Kalogeropoulos A."/>
            <person name="Katsoulou C."/>
            <person name="Kordes E."/>
            <person name="Lafuente M.J."/>
            <person name="Landt O."/>
            <person name="Louis E.J."/>
            <person name="Maarse A.C."/>
            <person name="Madania A."/>
            <person name="Mannhaupt G."/>
            <person name="Marck C."/>
            <person name="Martin R.P."/>
            <person name="Mewes H.-W."/>
            <person name="Michaux G."/>
            <person name="Paces V."/>
            <person name="Parle-McDermott A.G."/>
            <person name="Pearson B.M."/>
            <person name="Perrin A."/>
            <person name="Pettersson B."/>
            <person name="Poch O."/>
            <person name="Pohl T.M."/>
            <person name="Poirey R."/>
            <person name="Portetelle D."/>
            <person name="Pujol A."/>
            <person name="Purnelle B."/>
            <person name="Ramezani Rad M."/>
            <person name="Rechmann S."/>
            <person name="Schwager C."/>
            <person name="Schweizer M."/>
            <person name="Sor F."/>
            <person name="Sterky F."/>
            <person name="Tarassov I.A."/>
            <person name="Teodoru C."/>
            <person name="Tettelin H."/>
            <person name="Thierry A."/>
            <person name="Tobiasch E."/>
            <person name="Tzermia M."/>
            <person name="Uhlen M."/>
            <person name="Unseld M."/>
            <person name="Valens M."/>
            <person name="Vandenbol M."/>
            <person name="Vetter I."/>
            <person name="Vlcek C."/>
            <person name="Voet M."/>
            <person name="Volckaert G."/>
            <person name="Voss H."/>
            <person name="Wambutt R."/>
            <person name="Wedler H."/>
            <person name="Wiemann S."/>
            <person name="Winsor B."/>
            <person name="Wolfe K.H."/>
            <person name="Zollner A."/>
            <person name="Zumstein E."/>
            <person name="Kleine K."/>
        </authorList>
    </citation>
    <scope>NUCLEOTIDE SEQUENCE [LARGE SCALE GENOMIC DNA]</scope>
    <source>
        <strain>ATCC 204508 / S288c</strain>
    </source>
</reference>
<reference key="2">
    <citation type="journal article" date="2014" name="G3 (Bethesda)">
        <title>The reference genome sequence of Saccharomyces cerevisiae: Then and now.</title>
        <authorList>
            <person name="Engel S.R."/>
            <person name="Dietrich F.S."/>
            <person name="Fisk D.G."/>
            <person name="Binkley G."/>
            <person name="Balakrishnan R."/>
            <person name="Costanzo M.C."/>
            <person name="Dwight S.S."/>
            <person name="Hitz B.C."/>
            <person name="Karra K."/>
            <person name="Nash R.S."/>
            <person name="Weng S."/>
            <person name="Wong E.D."/>
            <person name="Lloyd P."/>
            <person name="Skrzypek M.S."/>
            <person name="Miyasato S.R."/>
            <person name="Simison M."/>
            <person name="Cherry J.M."/>
        </authorList>
    </citation>
    <scope>GENOME REANNOTATION</scope>
    <source>
        <strain>ATCC 204508 / S288c</strain>
    </source>
</reference>
<reference key="3">
    <citation type="journal article" date="2007" name="Genome Res.">
        <title>Approaching a complete repository of sequence-verified protein-encoding clones for Saccharomyces cerevisiae.</title>
        <authorList>
            <person name="Hu Y."/>
            <person name="Rolfs A."/>
            <person name="Bhullar B."/>
            <person name="Murthy T.V.S."/>
            <person name="Zhu C."/>
            <person name="Berger M.F."/>
            <person name="Camargo A.A."/>
            <person name="Kelley F."/>
            <person name="McCarron S."/>
            <person name="Jepson D."/>
            <person name="Richardson A."/>
            <person name="Raphael J."/>
            <person name="Moreira D."/>
            <person name="Taycher E."/>
            <person name="Zuo D."/>
            <person name="Mohr S."/>
            <person name="Kane M.F."/>
            <person name="Williamson J."/>
            <person name="Simpson A.J.G."/>
            <person name="Bulyk M.L."/>
            <person name="Harlow E."/>
            <person name="Marsischky G."/>
            <person name="Kolodner R.D."/>
            <person name="LaBaer J."/>
        </authorList>
    </citation>
    <scope>NUCLEOTIDE SEQUENCE [GENOMIC DNA]</scope>
    <source>
        <strain>ATCC 204508 / S288c</strain>
    </source>
</reference>
<reference key="4">
    <citation type="journal article" date="2004" name="J. Cell Biol.">
        <title>Two novel proteins in the mitochondrial outer membrane mediate beta-barrel protein assembly.</title>
        <authorList>
            <person name="Ishikawa D."/>
            <person name="Yamamoto H."/>
            <person name="Tamura Y."/>
            <person name="Moritoh K."/>
            <person name="Endo T."/>
        </authorList>
    </citation>
    <scope>FUNCTION</scope>
    <scope>SUBCELLULAR LOCATION</scope>
</reference>
<reference key="5">
    <citation type="journal article" date="2004" name="Cell">
        <title>Exploration of essential gene functions via titratable promoter alleles.</title>
        <authorList>
            <person name="Mnaimneh S."/>
            <person name="Davierwala A.P."/>
            <person name="Haynes J."/>
            <person name="Moffat J."/>
            <person name="Peng W.-T."/>
            <person name="Zhang W."/>
            <person name="Yang X."/>
            <person name="Pootoolal J."/>
            <person name="Chua G."/>
            <person name="Lopez A."/>
            <person name="Trochesset M."/>
            <person name="Morse D."/>
            <person name="Krogan N.J."/>
            <person name="Hiley S.L."/>
            <person name="Li Z."/>
            <person name="Morris Q."/>
            <person name="Grigull J."/>
            <person name="Mitsakakis N."/>
            <person name="Roberts C.J."/>
            <person name="Greenblatt J.F."/>
            <person name="Boone C."/>
            <person name="Kaiser C.A."/>
            <person name="Andrews B.J."/>
            <person name="Hughes T.R."/>
        </authorList>
    </citation>
    <scope>FUNCTION</scope>
</reference>
<reference key="6">
    <citation type="journal article" date="2005" name="EMBO Rep.">
        <title>Mim1, a protein required for the assembly of the TOM complex of mitochondria.</title>
        <authorList>
            <person name="Waizenegger T."/>
            <person name="Schmitt S."/>
            <person name="Zivkovic J."/>
            <person name="Neupert W."/>
            <person name="Rapaport D."/>
        </authorList>
    </citation>
    <scope>FUNCTION</scope>
    <scope>SUBCELLULAR LOCATION</scope>
    <scope>SUBUNIT</scope>
</reference>
<reference key="7">
    <citation type="journal article" date="2008" name="J. Biol. Chem.">
        <title>Biogenesis of the mitochondrial TOM complex: Mim1 promotes insertion and assembly of signal-anchored receptors.</title>
        <authorList>
            <person name="Becker T."/>
            <person name="Pfannschmidt S."/>
            <person name="Guiard B."/>
            <person name="Stojanovski D."/>
            <person name="Milenkovic D."/>
            <person name="Kutik S."/>
            <person name="Pfanner N."/>
            <person name="Meisinger C."/>
            <person name="Wiedemann N."/>
        </authorList>
    </citation>
    <scope>FUNCTION</scope>
    <scope>DISRUPTION PHENOTYPE</scope>
</reference>
<reference key="8">
    <citation type="journal article" date="2008" name="J. Mol. Biol.">
        <title>The transmembrane segment of Tom20 is recognized by Mim1 for docking to the mitochondrial TOM complex.</title>
        <authorList>
            <person name="Hulett J.M."/>
            <person name="Lueder F."/>
            <person name="Chan N.C."/>
            <person name="Perry A.J."/>
            <person name="Wolynec P."/>
            <person name="Likic V.A."/>
            <person name="Gooley P.R."/>
            <person name="Lithgow T."/>
        </authorList>
    </citation>
    <scope>FUNCTION</scope>
    <scope>SUBUNIT</scope>
</reference>
<reference key="9">
    <citation type="journal article" date="2011" name="J. Cell Biol.">
        <title>The mitochondrial import protein Mim1 promotes biogenesis of multispanning outer membrane proteins.</title>
        <authorList>
            <person name="Becker T."/>
            <person name="Wenz L.S."/>
            <person name="Krueger V."/>
            <person name="Lehmann W."/>
            <person name="Mueller J.M."/>
            <person name="Goroncy L."/>
            <person name="Zufall N."/>
            <person name="Lithgow T."/>
            <person name="Guiard B."/>
            <person name="Chacinska A."/>
            <person name="Wagner R."/>
            <person name="Meisinger C."/>
            <person name="Pfanner N."/>
        </authorList>
    </citation>
    <scope>FUNCTION</scope>
    <scope>SUBUNIT</scope>
    <scope>INTERACTION WITH TOM70</scope>
</reference>
<reference key="10">
    <citation type="journal article" date="2011" name="J. Cell Biol.">
        <title>Multispan mitochondrial outer membrane protein Ugo1 follows a unique Mim1-dependent import pathway.</title>
        <authorList>
            <person name="Papic D."/>
            <person name="Krumpe K."/>
            <person name="Dukanovic J."/>
            <person name="Dimmer K.S."/>
            <person name="Rapaport D."/>
        </authorList>
    </citation>
    <scope>FUNCTION</scope>
</reference>
<reference key="11">
    <citation type="journal article" date="2012" name="J. Cell Sci.">
        <title>A crucial role for Mim2 in the biogenesis of mitochondrial outer membrane proteins.</title>
        <authorList>
            <person name="Dimmer K.S."/>
            <person name="Papic D."/>
            <person name="Schumann B."/>
            <person name="Sperl D."/>
            <person name="Krumpe K."/>
            <person name="Walther D.M."/>
            <person name="Rapaport D."/>
        </authorList>
    </citation>
    <scope>FUNCTION</scope>
    <scope>SUBUNIT</scope>
    <scope>INTERACTION WITH MIM2</scope>
</reference>
<gene>
    <name type="primary">MIM1</name>
    <name type="synonym">TOM13</name>
    <name type="ordered locus">YOL026C</name>
</gene>
<feature type="chain" id="PRO_0000218767" description="Mitochondrial import protein 1">
    <location>
        <begin position="1"/>
        <end position="113"/>
    </location>
</feature>
<feature type="transmembrane region" description="Helical" evidence="1">
    <location>
        <begin position="39"/>
        <end position="62"/>
    </location>
</feature>
<sequence>MTEVVGFWESVSDDESEDKDCMEVQNTVSADESPLVQSLVSFVGSCSINLLLPFLNGMMLGFGELFAHELCWRFNWFNHRNKGYKVYPESRKIAALKEISSPGTRGRVASKFL</sequence>
<proteinExistence type="evidence at protein level"/>
<keyword id="KW-0472">Membrane</keyword>
<keyword id="KW-0496">Mitochondrion</keyword>
<keyword id="KW-1000">Mitochondrion outer membrane</keyword>
<keyword id="KW-0653">Protein transport</keyword>
<keyword id="KW-1185">Reference proteome</keyword>
<keyword id="KW-0812">Transmembrane</keyword>
<keyword id="KW-1133">Transmembrane helix</keyword>
<keyword id="KW-0813">Transport</keyword>
<dbReference type="EMBL" id="Z74768">
    <property type="protein sequence ID" value="CAA99026.1"/>
    <property type="molecule type" value="Genomic_DNA"/>
</dbReference>
<dbReference type="EMBL" id="AY557996">
    <property type="protein sequence ID" value="AAS56322.1"/>
    <property type="molecule type" value="Genomic_DNA"/>
</dbReference>
<dbReference type="EMBL" id="BK006948">
    <property type="protein sequence ID" value="DAA10755.1"/>
    <property type="molecule type" value="Genomic_DNA"/>
</dbReference>
<dbReference type="PIR" id="S66709">
    <property type="entry name" value="S66709"/>
</dbReference>
<dbReference type="RefSeq" id="NP_014616.1">
    <property type="nucleotide sequence ID" value="NM_001183280.1"/>
</dbReference>
<dbReference type="SMR" id="Q08176"/>
<dbReference type="BioGRID" id="34374">
    <property type="interactions" value="26"/>
</dbReference>
<dbReference type="FunCoup" id="Q08176">
    <property type="interactions" value="50"/>
</dbReference>
<dbReference type="IntAct" id="Q08176">
    <property type="interactions" value="4"/>
</dbReference>
<dbReference type="MINT" id="Q08176"/>
<dbReference type="STRING" id="4932.YOL026C"/>
<dbReference type="TCDB" id="1.B.33.3.1">
    <property type="family name" value="the outer membrane protein insertion porin (bam complex) (ompip) family"/>
</dbReference>
<dbReference type="iPTMnet" id="Q08176"/>
<dbReference type="PaxDb" id="4932-YOL026C"/>
<dbReference type="PeptideAtlas" id="Q08176"/>
<dbReference type="EnsemblFungi" id="YOL026C_mRNA">
    <property type="protein sequence ID" value="YOL026C"/>
    <property type="gene ID" value="YOL026C"/>
</dbReference>
<dbReference type="GeneID" id="854131"/>
<dbReference type="KEGG" id="sce:YOL026C"/>
<dbReference type="AGR" id="SGD:S000005386"/>
<dbReference type="SGD" id="S000005386">
    <property type="gene designation" value="MIM1"/>
</dbReference>
<dbReference type="VEuPathDB" id="FungiDB:YOL026C"/>
<dbReference type="eggNOG" id="ENOG502SBHA">
    <property type="taxonomic scope" value="Eukaryota"/>
</dbReference>
<dbReference type="HOGENOM" id="CLU_2134979_0_0_1"/>
<dbReference type="InParanoid" id="Q08176"/>
<dbReference type="OrthoDB" id="5529571at2759"/>
<dbReference type="BioCyc" id="YEAST:G3O-33442-MONOMER"/>
<dbReference type="BioGRID-ORCS" id="854131">
    <property type="hits" value="3 hits in 10 CRISPR screens"/>
</dbReference>
<dbReference type="PRO" id="PR:Q08176"/>
<dbReference type="Proteomes" id="UP000002311">
    <property type="component" value="Chromosome XV"/>
</dbReference>
<dbReference type="RNAct" id="Q08176">
    <property type="molecule type" value="protein"/>
</dbReference>
<dbReference type="GO" id="GO:0140595">
    <property type="term" value="C:MIM complex"/>
    <property type="evidence" value="ECO:0000353"/>
    <property type="project" value="SGD"/>
</dbReference>
<dbReference type="GO" id="GO:0005741">
    <property type="term" value="C:mitochondrial outer membrane"/>
    <property type="evidence" value="ECO:0000314"/>
    <property type="project" value="SGD"/>
</dbReference>
<dbReference type="GO" id="GO:0070096">
    <property type="term" value="P:mitochondrial outer membrane translocase complex assembly"/>
    <property type="evidence" value="ECO:0000315"/>
    <property type="project" value="SGD"/>
</dbReference>
<dbReference type="GO" id="GO:0045040">
    <property type="term" value="P:protein insertion into mitochondrial outer membrane"/>
    <property type="evidence" value="ECO:0000315"/>
    <property type="project" value="SGD"/>
</dbReference>
<dbReference type="InterPro" id="IPR013262">
    <property type="entry name" value="OMP_MIM1/TOM13_mt"/>
</dbReference>
<dbReference type="PANTHER" id="PTHR28241">
    <property type="entry name" value="MITOCHONDRIAL IMPORT PROTEIN 1"/>
    <property type="match status" value="1"/>
</dbReference>
<dbReference type="PANTHER" id="PTHR28241:SF1">
    <property type="entry name" value="MITOCHONDRIAL IMPORT PROTEIN 1"/>
    <property type="match status" value="1"/>
</dbReference>
<dbReference type="Pfam" id="PF08219">
    <property type="entry name" value="TOM13"/>
    <property type="match status" value="1"/>
</dbReference>
<organism>
    <name type="scientific">Saccharomyces cerevisiae (strain ATCC 204508 / S288c)</name>
    <name type="common">Baker's yeast</name>
    <dbReference type="NCBI Taxonomy" id="559292"/>
    <lineage>
        <taxon>Eukaryota</taxon>
        <taxon>Fungi</taxon>
        <taxon>Dikarya</taxon>
        <taxon>Ascomycota</taxon>
        <taxon>Saccharomycotina</taxon>
        <taxon>Saccharomycetes</taxon>
        <taxon>Saccharomycetales</taxon>
        <taxon>Saccharomycetaceae</taxon>
        <taxon>Saccharomyces</taxon>
    </lineage>
</organism>
<evidence type="ECO:0000255" key="1"/>
<evidence type="ECO:0000269" key="2">
    <source>
    </source>
</evidence>
<evidence type="ECO:0000269" key="3">
    <source>
    </source>
</evidence>
<evidence type="ECO:0000269" key="4">
    <source>
    </source>
</evidence>
<evidence type="ECO:0000269" key="5">
    <source>
    </source>
</evidence>
<evidence type="ECO:0000269" key="6">
    <source>
    </source>
</evidence>
<evidence type="ECO:0000269" key="7">
    <source>
    </source>
</evidence>
<evidence type="ECO:0000269" key="8">
    <source>
    </source>
</evidence>
<evidence type="ECO:0000269" key="9">
    <source>
    </source>
</evidence>
<evidence type="ECO:0000305" key="10"/>
<comment type="function">
    <text evidence="2 3 4 5 6 7 8 9">Component of the MIM complex required for mitochondrial outer membrane protein import (PubMed:22467864). The MIM complex cooperates with the receptor TOM70 in binding of precursor proteins and promotes their insertion and assembly into the outer membrane (PubMed:21825073). Involved in import of the subset of proteins with multiple alpha-helical transmembrane segments, including UGO1 (PubMed:21825073, PubMed:21825074). Required for the assembly of the TOM (translocase of outer membrane) receptor complex, which is responsible for the recognition and translocation of cytosolically synthesized mitochondrial preproteins (PubMed:15242642, PubMed:15326197, PubMed:15608614). Required specifically for assembly of TOM40, TOM20, and TOM70, but not TOM22 (PubMed:17974559, PubMed:18187149).</text>
</comment>
<comment type="subunit">
    <text evidence="4 6 7 9">Component of the MIM complex containing at least MIM1 and MIM2 (PubMed:15608614, PubMed:18187149, PubMed:21825073, PubMed:22467864). Interacts with MIM2; interaction is direct (PubMed:22467864). Interacts with TOM70 (PubMed:21825073).</text>
</comment>
<comment type="subcellular location">
    <subcellularLocation>
        <location evidence="3 4">Mitochondrion outer membrane</location>
    </subcellularLocation>
</comment>
<comment type="disruption phenotype">
    <text evidence="5">Leads to reduced levels of TOM complex but retains the respiratory chain.</text>
</comment>
<comment type="similarity">
    <text evidence="10">Belongs to the MIM1 family.</text>
</comment>
<protein>
    <recommendedName>
        <fullName>Mitochondrial import protein 1</fullName>
    </recommendedName>
    <alternativeName>
        <fullName>Mitochondrial 13 kDa outer membrane protein</fullName>
    </alternativeName>
</protein>